<accession>C0MBW5</accession>
<organism>
    <name type="scientific">Streptococcus equi subsp. equi (strain 4047)</name>
    <dbReference type="NCBI Taxonomy" id="553482"/>
    <lineage>
        <taxon>Bacteria</taxon>
        <taxon>Bacillati</taxon>
        <taxon>Bacillota</taxon>
        <taxon>Bacilli</taxon>
        <taxon>Lactobacillales</taxon>
        <taxon>Streptococcaceae</taxon>
        <taxon>Streptococcus</taxon>
    </lineage>
</organism>
<gene>
    <name evidence="1" type="primary">rpsJ</name>
    <name type="ordered locus">SEQ_0054</name>
</gene>
<dbReference type="EMBL" id="FM204883">
    <property type="protein sequence ID" value="CAW91965.1"/>
    <property type="molecule type" value="Genomic_DNA"/>
</dbReference>
<dbReference type="RefSeq" id="WP_003046044.1">
    <property type="nucleotide sequence ID" value="NC_012471.1"/>
</dbReference>
<dbReference type="SMR" id="C0MBW5"/>
<dbReference type="GeneID" id="98392391"/>
<dbReference type="KEGG" id="seu:SEQ_0054"/>
<dbReference type="HOGENOM" id="CLU_122625_1_3_9"/>
<dbReference type="OrthoDB" id="9804464at2"/>
<dbReference type="Proteomes" id="UP000001365">
    <property type="component" value="Chromosome"/>
</dbReference>
<dbReference type="GO" id="GO:1990904">
    <property type="term" value="C:ribonucleoprotein complex"/>
    <property type="evidence" value="ECO:0007669"/>
    <property type="project" value="UniProtKB-KW"/>
</dbReference>
<dbReference type="GO" id="GO:0005840">
    <property type="term" value="C:ribosome"/>
    <property type="evidence" value="ECO:0007669"/>
    <property type="project" value="UniProtKB-KW"/>
</dbReference>
<dbReference type="GO" id="GO:0003735">
    <property type="term" value="F:structural constituent of ribosome"/>
    <property type="evidence" value="ECO:0007669"/>
    <property type="project" value="InterPro"/>
</dbReference>
<dbReference type="GO" id="GO:0000049">
    <property type="term" value="F:tRNA binding"/>
    <property type="evidence" value="ECO:0007669"/>
    <property type="project" value="UniProtKB-UniRule"/>
</dbReference>
<dbReference type="GO" id="GO:0006412">
    <property type="term" value="P:translation"/>
    <property type="evidence" value="ECO:0007669"/>
    <property type="project" value="UniProtKB-UniRule"/>
</dbReference>
<dbReference type="FunFam" id="3.30.70.600:FF:000001">
    <property type="entry name" value="30S ribosomal protein S10"/>
    <property type="match status" value="1"/>
</dbReference>
<dbReference type="Gene3D" id="3.30.70.600">
    <property type="entry name" value="Ribosomal protein S10 domain"/>
    <property type="match status" value="1"/>
</dbReference>
<dbReference type="HAMAP" id="MF_00508">
    <property type="entry name" value="Ribosomal_uS10"/>
    <property type="match status" value="1"/>
</dbReference>
<dbReference type="InterPro" id="IPR001848">
    <property type="entry name" value="Ribosomal_uS10"/>
</dbReference>
<dbReference type="InterPro" id="IPR018268">
    <property type="entry name" value="Ribosomal_uS10_CS"/>
</dbReference>
<dbReference type="InterPro" id="IPR027486">
    <property type="entry name" value="Ribosomal_uS10_dom"/>
</dbReference>
<dbReference type="InterPro" id="IPR036838">
    <property type="entry name" value="Ribosomal_uS10_dom_sf"/>
</dbReference>
<dbReference type="NCBIfam" id="NF001861">
    <property type="entry name" value="PRK00596.1"/>
    <property type="match status" value="1"/>
</dbReference>
<dbReference type="NCBIfam" id="TIGR01049">
    <property type="entry name" value="rpsJ_bact"/>
    <property type="match status" value="1"/>
</dbReference>
<dbReference type="PANTHER" id="PTHR11700">
    <property type="entry name" value="30S RIBOSOMAL PROTEIN S10 FAMILY MEMBER"/>
    <property type="match status" value="1"/>
</dbReference>
<dbReference type="Pfam" id="PF00338">
    <property type="entry name" value="Ribosomal_S10"/>
    <property type="match status" value="1"/>
</dbReference>
<dbReference type="PRINTS" id="PR00971">
    <property type="entry name" value="RIBOSOMALS10"/>
</dbReference>
<dbReference type="SMART" id="SM01403">
    <property type="entry name" value="Ribosomal_S10"/>
    <property type="match status" value="1"/>
</dbReference>
<dbReference type="SUPFAM" id="SSF54999">
    <property type="entry name" value="Ribosomal protein S10"/>
    <property type="match status" value="1"/>
</dbReference>
<dbReference type="PROSITE" id="PS00361">
    <property type="entry name" value="RIBOSOMAL_S10"/>
    <property type="match status" value="1"/>
</dbReference>
<proteinExistence type="inferred from homology"/>
<comment type="function">
    <text evidence="1">Involved in the binding of tRNA to the ribosomes.</text>
</comment>
<comment type="subunit">
    <text evidence="1">Part of the 30S ribosomal subunit.</text>
</comment>
<comment type="similarity">
    <text evidence="1">Belongs to the universal ribosomal protein uS10 family.</text>
</comment>
<reference key="1">
    <citation type="journal article" date="2009" name="PLoS Pathog.">
        <title>Genomic evidence for the evolution of Streptococcus equi: host restriction, increased virulence, and genetic exchange with human pathogens.</title>
        <authorList>
            <person name="Holden M.T.G."/>
            <person name="Heather Z."/>
            <person name="Paillot R."/>
            <person name="Steward K.F."/>
            <person name="Webb K."/>
            <person name="Ainslie F."/>
            <person name="Jourdan T."/>
            <person name="Bason N.C."/>
            <person name="Holroyd N.E."/>
            <person name="Mungall K."/>
            <person name="Quail M.A."/>
            <person name="Sanders M."/>
            <person name="Simmonds M."/>
            <person name="Willey D."/>
            <person name="Brooks K."/>
            <person name="Aanensen D.M."/>
            <person name="Spratt B.G."/>
            <person name="Jolley K.A."/>
            <person name="Maiden M.C.J."/>
            <person name="Kehoe M."/>
            <person name="Chanter N."/>
            <person name="Bentley S.D."/>
            <person name="Robinson C."/>
            <person name="Maskell D.J."/>
            <person name="Parkhill J."/>
            <person name="Waller A.S."/>
        </authorList>
    </citation>
    <scope>NUCLEOTIDE SEQUENCE [LARGE SCALE GENOMIC DNA]</scope>
    <source>
        <strain>4047</strain>
    </source>
</reference>
<protein>
    <recommendedName>
        <fullName evidence="1">Small ribosomal subunit protein uS10</fullName>
    </recommendedName>
    <alternativeName>
        <fullName evidence="2">30S ribosomal protein S10</fullName>
    </alternativeName>
</protein>
<sequence>MANKKIRIRLKAYEHRTLDTAAEKIVETATRTGATVAGPVPLPTERSLYTIIRATHKYKDSREQFEMRTHKRLIDIVNPTQKTVDALMKLDLPSGVNVEIKL</sequence>
<keyword id="KW-0687">Ribonucleoprotein</keyword>
<keyword id="KW-0689">Ribosomal protein</keyword>
<name>RS10_STRE4</name>
<evidence type="ECO:0000255" key="1">
    <source>
        <dbReference type="HAMAP-Rule" id="MF_00508"/>
    </source>
</evidence>
<evidence type="ECO:0000305" key="2"/>
<feature type="chain" id="PRO_1000146077" description="Small ribosomal subunit protein uS10">
    <location>
        <begin position="1"/>
        <end position="102"/>
    </location>
</feature>